<gene>
    <name type="primary">flgG</name>
    <name type="synonym">fla FVII</name>
    <name type="synonym">flaL</name>
    <name type="ordered locus">STY1218</name>
    <name type="ordered locus">t1741</name>
</gene>
<feature type="chain" id="PRO_0000180852" description="Flagellar basal-body rod protein FlgG">
    <location>
        <begin position="1"/>
        <end position="260"/>
    </location>
</feature>
<protein>
    <recommendedName>
        <fullName>Flagellar basal-body rod protein FlgG</fullName>
    </recommendedName>
    <alternativeName>
        <fullName>Distal rod protein</fullName>
    </alternativeName>
</protein>
<dbReference type="EMBL" id="AL513382">
    <property type="protein sequence ID" value="CAD08303.1"/>
    <property type="molecule type" value="Genomic_DNA"/>
</dbReference>
<dbReference type="EMBL" id="AE014613">
    <property type="protein sequence ID" value="AAO69365.1"/>
    <property type="molecule type" value="Genomic_DNA"/>
</dbReference>
<dbReference type="RefSeq" id="NP_455672.1">
    <property type="nucleotide sequence ID" value="NC_003198.1"/>
</dbReference>
<dbReference type="RefSeq" id="WP_000625851.1">
    <property type="nucleotide sequence ID" value="NZ_WSUR01000018.1"/>
</dbReference>
<dbReference type="SMR" id="P0A1J4"/>
<dbReference type="STRING" id="220341.gene:17585183"/>
<dbReference type="GeneID" id="66755582"/>
<dbReference type="KEGG" id="stt:t1741"/>
<dbReference type="KEGG" id="sty:STY1218"/>
<dbReference type="PATRIC" id="fig|220341.7.peg.1219"/>
<dbReference type="eggNOG" id="COG4786">
    <property type="taxonomic scope" value="Bacteria"/>
</dbReference>
<dbReference type="HOGENOM" id="CLU_013687_0_1_6"/>
<dbReference type="OMA" id="MIRSLWT"/>
<dbReference type="OrthoDB" id="9804559at2"/>
<dbReference type="Proteomes" id="UP000000541">
    <property type="component" value="Chromosome"/>
</dbReference>
<dbReference type="Proteomes" id="UP000002670">
    <property type="component" value="Chromosome"/>
</dbReference>
<dbReference type="GO" id="GO:0009426">
    <property type="term" value="C:bacterial-type flagellum basal body, distal rod"/>
    <property type="evidence" value="ECO:0007669"/>
    <property type="project" value="InterPro"/>
</dbReference>
<dbReference type="GO" id="GO:0071978">
    <property type="term" value="P:bacterial-type flagellum-dependent swarming motility"/>
    <property type="evidence" value="ECO:0007669"/>
    <property type="project" value="TreeGrafter"/>
</dbReference>
<dbReference type="InterPro" id="IPR001444">
    <property type="entry name" value="Flag_bb_rod_N"/>
</dbReference>
<dbReference type="InterPro" id="IPR019776">
    <property type="entry name" value="Flagellar_basal_body_rod_CS"/>
</dbReference>
<dbReference type="InterPro" id="IPR020013">
    <property type="entry name" value="Flagellar_FlgE/F/G"/>
</dbReference>
<dbReference type="InterPro" id="IPR010930">
    <property type="entry name" value="Flg_bb/hook_C_dom"/>
</dbReference>
<dbReference type="InterPro" id="IPR037925">
    <property type="entry name" value="FlgE/F/G-like"/>
</dbReference>
<dbReference type="InterPro" id="IPR012834">
    <property type="entry name" value="FlgG_G_neg"/>
</dbReference>
<dbReference type="InterPro" id="IPR053967">
    <property type="entry name" value="LlgE_F_G-like_D1"/>
</dbReference>
<dbReference type="NCBIfam" id="TIGR03506">
    <property type="entry name" value="FlgEFG_subfam"/>
    <property type="match status" value="2"/>
</dbReference>
<dbReference type="NCBIfam" id="TIGR02488">
    <property type="entry name" value="flgG_G_neg"/>
    <property type="match status" value="1"/>
</dbReference>
<dbReference type="PANTHER" id="PTHR30435:SF19">
    <property type="entry name" value="FLAGELLAR BASAL-BODY ROD PROTEIN FLGG"/>
    <property type="match status" value="1"/>
</dbReference>
<dbReference type="PANTHER" id="PTHR30435">
    <property type="entry name" value="FLAGELLAR PROTEIN"/>
    <property type="match status" value="1"/>
</dbReference>
<dbReference type="Pfam" id="PF00460">
    <property type="entry name" value="Flg_bb_rod"/>
    <property type="match status" value="1"/>
</dbReference>
<dbReference type="Pfam" id="PF06429">
    <property type="entry name" value="Flg_bbr_C"/>
    <property type="match status" value="1"/>
</dbReference>
<dbReference type="Pfam" id="PF22692">
    <property type="entry name" value="LlgE_F_G_D1"/>
    <property type="match status" value="1"/>
</dbReference>
<dbReference type="SUPFAM" id="SSF117143">
    <property type="entry name" value="Flagellar hook protein flgE"/>
    <property type="match status" value="1"/>
</dbReference>
<dbReference type="PROSITE" id="PS00588">
    <property type="entry name" value="FLAGELLA_BB_ROD"/>
    <property type="match status" value="1"/>
</dbReference>
<sequence length="260" mass="27770">MISSLWIAKTGLDAQQTNMDVIANNLANVSTNGFKRQRAVFEDLLYQTIRQPGAQSSEQTTLPSGLQIGTGVRPVATERLHSQGNLSQTNNSKDVAIKGQGFFQVMLPDGTSAYTRDGSFQVDQNGQLVTAGGFQVQPAITIPANALSITIGRDGVVSVTQQGQAAPVQVGQLNLTTFMNDTGLESIGENLYIETQSSGAPNESTPGLNGAGLLYQGYVETSNVNVAEELVNMIQVQRAYEINSKAVSTTDQMLQKLTQL</sequence>
<accession>P0A1J4</accession>
<accession>P16439</accession>
<name>FLGG_SALTI</name>
<evidence type="ECO:0000250" key="1"/>
<evidence type="ECO:0000305" key="2"/>
<reference key="1">
    <citation type="journal article" date="2001" name="Nature">
        <title>Complete genome sequence of a multiple drug resistant Salmonella enterica serovar Typhi CT18.</title>
        <authorList>
            <person name="Parkhill J."/>
            <person name="Dougan G."/>
            <person name="James K.D."/>
            <person name="Thomson N.R."/>
            <person name="Pickard D."/>
            <person name="Wain J."/>
            <person name="Churcher C.M."/>
            <person name="Mungall K.L."/>
            <person name="Bentley S.D."/>
            <person name="Holden M.T.G."/>
            <person name="Sebaihia M."/>
            <person name="Baker S."/>
            <person name="Basham D."/>
            <person name="Brooks K."/>
            <person name="Chillingworth T."/>
            <person name="Connerton P."/>
            <person name="Cronin A."/>
            <person name="Davis P."/>
            <person name="Davies R.M."/>
            <person name="Dowd L."/>
            <person name="White N."/>
            <person name="Farrar J."/>
            <person name="Feltwell T."/>
            <person name="Hamlin N."/>
            <person name="Haque A."/>
            <person name="Hien T.T."/>
            <person name="Holroyd S."/>
            <person name="Jagels K."/>
            <person name="Krogh A."/>
            <person name="Larsen T.S."/>
            <person name="Leather S."/>
            <person name="Moule S."/>
            <person name="O'Gaora P."/>
            <person name="Parry C."/>
            <person name="Quail M.A."/>
            <person name="Rutherford K.M."/>
            <person name="Simmonds M."/>
            <person name="Skelton J."/>
            <person name="Stevens K."/>
            <person name="Whitehead S."/>
            <person name="Barrell B.G."/>
        </authorList>
    </citation>
    <scope>NUCLEOTIDE SEQUENCE [LARGE SCALE GENOMIC DNA]</scope>
    <source>
        <strain>CT18</strain>
    </source>
</reference>
<reference key="2">
    <citation type="journal article" date="2003" name="J. Bacteriol.">
        <title>Comparative genomics of Salmonella enterica serovar Typhi strains Ty2 and CT18.</title>
        <authorList>
            <person name="Deng W."/>
            <person name="Liou S.-R."/>
            <person name="Plunkett G. III"/>
            <person name="Mayhew G.F."/>
            <person name="Rose D.J."/>
            <person name="Burland V."/>
            <person name="Kodoyianni V."/>
            <person name="Schwartz D.C."/>
            <person name="Blattner F.R."/>
        </authorList>
    </citation>
    <scope>NUCLEOTIDE SEQUENCE [LARGE SCALE GENOMIC DNA]</scope>
    <source>
        <strain>ATCC 700931 / Ty2</strain>
    </source>
</reference>
<organism>
    <name type="scientific">Salmonella typhi</name>
    <dbReference type="NCBI Taxonomy" id="90370"/>
    <lineage>
        <taxon>Bacteria</taxon>
        <taxon>Pseudomonadati</taxon>
        <taxon>Pseudomonadota</taxon>
        <taxon>Gammaproteobacteria</taxon>
        <taxon>Enterobacterales</taxon>
        <taxon>Enterobacteriaceae</taxon>
        <taxon>Salmonella</taxon>
    </lineage>
</organism>
<comment type="subunit">
    <text evidence="1">The basal body constitutes a major portion of the flagellar organelle and consists of four rings (L,P,S, and M) mounted on a central rod. The rod consists of about 26 subunits of FlgG in the distal portion, and FlgB, FlgC and FlgF are thought to build up the proximal portion of the rod with about 6 subunits each (By similarity).</text>
</comment>
<comment type="subcellular location">
    <subcellularLocation>
        <location evidence="1">Bacterial flagellum basal body</location>
    </subcellularLocation>
</comment>
<comment type="similarity">
    <text evidence="2">Belongs to the flagella basal body rod proteins family.</text>
</comment>
<proteinExistence type="inferred from homology"/>
<keyword id="KW-0975">Bacterial flagellum</keyword>